<dbReference type="EC" id="3.5.4.2" evidence="1"/>
<dbReference type="EMBL" id="AE008384">
    <property type="protein sequence ID" value="AAM32606.1"/>
    <property type="molecule type" value="Genomic_DNA"/>
</dbReference>
<dbReference type="RefSeq" id="WP_011034812.1">
    <property type="nucleotide sequence ID" value="NC_003901.1"/>
</dbReference>
<dbReference type="SMR" id="Q8PT13"/>
<dbReference type="DNASU" id="1481252"/>
<dbReference type="GeneID" id="24839510"/>
<dbReference type="KEGG" id="mma:MM_2910"/>
<dbReference type="PATRIC" id="fig|192952.21.peg.3363"/>
<dbReference type="eggNOG" id="arCOG00693">
    <property type="taxonomic scope" value="Archaea"/>
</dbReference>
<dbReference type="HOGENOM" id="CLU_027935_0_0_2"/>
<dbReference type="Proteomes" id="UP000000595">
    <property type="component" value="Chromosome"/>
</dbReference>
<dbReference type="GO" id="GO:0000034">
    <property type="term" value="F:adenine deaminase activity"/>
    <property type="evidence" value="ECO:0007669"/>
    <property type="project" value="UniProtKB-UniRule"/>
</dbReference>
<dbReference type="GO" id="GO:0006146">
    <property type="term" value="P:adenine catabolic process"/>
    <property type="evidence" value="ECO:0007669"/>
    <property type="project" value="InterPro"/>
</dbReference>
<dbReference type="CDD" id="cd01295">
    <property type="entry name" value="AdeC"/>
    <property type="match status" value="1"/>
</dbReference>
<dbReference type="FunFam" id="3.20.20.140:FF:000016">
    <property type="entry name" value="Adenine deaminase"/>
    <property type="match status" value="1"/>
</dbReference>
<dbReference type="Gene3D" id="3.20.20.140">
    <property type="entry name" value="Metal-dependent hydrolases"/>
    <property type="match status" value="1"/>
</dbReference>
<dbReference type="HAMAP" id="MF_01518">
    <property type="entry name" value="Adenine_deamin"/>
    <property type="match status" value="1"/>
</dbReference>
<dbReference type="InterPro" id="IPR006679">
    <property type="entry name" value="Adenine_deam"/>
</dbReference>
<dbReference type="InterPro" id="IPR026912">
    <property type="entry name" value="Adenine_deam_C"/>
</dbReference>
<dbReference type="InterPro" id="IPR006680">
    <property type="entry name" value="Amidohydro-rel"/>
</dbReference>
<dbReference type="InterPro" id="IPR011059">
    <property type="entry name" value="Metal-dep_hydrolase_composite"/>
</dbReference>
<dbReference type="InterPro" id="IPR032466">
    <property type="entry name" value="Metal_Hydrolase"/>
</dbReference>
<dbReference type="NCBIfam" id="TIGR01178">
    <property type="entry name" value="ade"/>
    <property type="match status" value="1"/>
</dbReference>
<dbReference type="PANTHER" id="PTHR11113:SF2">
    <property type="entry name" value="ADENINE DEAMINASE"/>
    <property type="match status" value="1"/>
</dbReference>
<dbReference type="PANTHER" id="PTHR11113">
    <property type="entry name" value="N-ACETYLGLUCOSAMINE-6-PHOSPHATE DEACETYLASE"/>
    <property type="match status" value="1"/>
</dbReference>
<dbReference type="Pfam" id="PF13382">
    <property type="entry name" value="Adenine_deam_C"/>
    <property type="match status" value="1"/>
</dbReference>
<dbReference type="Pfam" id="PF01979">
    <property type="entry name" value="Amidohydro_1"/>
    <property type="match status" value="1"/>
</dbReference>
<dbReference type="SUPFAM" id="SSF51338">
    <property type="entry name" value="Composite domain of metallo-dependent hydrolases"/>
    <property type="match status" value="1"/>
</dbReference>
<dbReference type="SUPFAM" id="SSF51556">
    <property type="entry name" value="Metallo-dependent hydrolases"/>
    <property type="match status" value="1"/>
</dbReference>
<accession>Q8PT13</accession>
<gene>
    <name evidence="1" type="primary">ade</name>
    <name type="ordered locus">MM_2910</name>
</gene>
<organism>
    <name type="scientific">Methanosarcina mazei (strain ATCC BAA-159 / DSM 3647 / Goe1 / Go1 / JCM 11833 / OCM 88)</name>
    <name type="common">Methanosarcina frisia</name>
    <dbReference type="NCBI Taxonomy" id="192952"/>
    <lineage>
        <taxon>Archaea</taxon>
        <taxon>Methanobacteriati</taxon>
        <taxon>Methanobacteriota</taxon>
        <taxon>Stenosarchaea group</taxon>
        <taxon>Methanomicrobia</taxon>
        <taxon>Methanosarcinales</taxon>
        <taxon>Methanosarcinaceae</taxon>
        <taxon>Methanosarcina</taxon>
    </lineage>
</organism>
<proteinExistence type="inferred from homology"/>
<feature type="chain" id="PRO_0000142442" description="Adenine deaminase">
    <location>
        <begin position="1"/>
        <end position="555"/>
    </location>
</feature>
<comment type="catalytic activity">
    <reaction evidence="1">
        <text>adenine + H2O + H(+) = hypoxanthine + NH4(+)</text>
        <dbReference type="Rhea" id="RHEA:23688"/>
        <dbReference type="ChEBI" id="CHEBI:15377"/>
        <dbReference type="ChEBI" id="CHEBI:15378"/>
        <dbReference type="ChEBI" id="CHEBI:16708"/>
        <dbReference type="ChEBI" id="CHEBI:17368"/>
        <dbReference type="ChEBI" id="CHEBI:28938"/>
        <dbReference type="EC" id="3.5.4.2"/>
    </reaction>
</comment>
<comment type="cofactor">
    <cofactor evidence="1">
        <name>Mn(2+)</name>
        <dbReference type="ChEBI" id="CHEBI:29035"/>
    </cofactor>
</comment>
<comment type="similarity">
    <text evidence="1">Belongs to the metallo-dependent hydrolases superfamily. Adenine deaminase family.</text>
</comment>
<protein>
    <recommendedName>
        <fullName evidence="1">Adenine deaminase</fullName>
        <shortName evidence="1">Adenase</shortName>
        <shortName evidence="1">Adenine aminase</shortName>
        <ecNumber evidence="1">3.5.4.2</ecNumber>
    </recommendedName>
</protein>
<sequence length="555" mass="61369">MKKYMGIIVDAISRRQFKGEITVENGKIIRVEEKEHDNEQYILPGLVDAHVHIESSMTVPSVFARMAVAKGTVAVVSDPHEIANVMGEEGIEFMLEDSKKSPLKVYFGVPSCVPATPFESSGAVLDINAVDRLLAKDDLHYLSEMMNFPGVILEFPDVMAKLESARKHGKVIDGHAPGLRGADLQKYIGAGISTDHECFEYEEAREKIELGMKILIREGSSARNFETLYPLIDEYPDHVMLCTDDSHPDTLIYEGHIDKLIRRGQEKGLDIYNLIRTAVFNPVEHYGLNVGLLREGDPADFIIVDNLKSFNILSTFIDGECVYENGKVLFPLEKVPAKNVFNRNKISIDDVKLVPPAGAIQEQTTEKGIKKIRVIVANDGELVTGQELIVPKIENGNLVSDPERDILKMVVLSRYSDDPVRIGFIKNIGLEKGAIASSIAHDSHNIIAVGATDEDIVETVNRLIKNKGGIAVGTAENLLDLPLEVAGLMSTLEGEEVASRYHLLNEEARKLGTSLESPFMTLAFMSLLVIPELKLGDKGLFDVTKFEFVDLFADE</sequence>
<keyword id="KW-0378">Hydrolase</keyword>
<keyword id="KW-0464">Manganese</keyword>
<name>ADEC_METMA</name>
<reference key="1">
    <citation type="journal article" date="2002" name="J. Mol. Microbiol. Biotechnol.">
        <title>The genome of Methanosarcina mazei: evidence for lateral gene transfer between Bacteria and Archaea.</title>
        <authorList>
            <person name="Deppenmeier U."/>
            <person name="Johann A."/>
            <person name="Hartsch T."/>
            <person name="Merkl R."/>
            <person name="Schmitz R.A."/>
            <person name="Martinez-Arias R."/>
            <person name="Henne A."/>
            <person name="Wiezer A."/>
            <person name="Baeumer S."/>
            <person name="Jacobi C."/>
            <person name="Brueggemann H."/>
            <person name="Lienard T."/>
            <person name="Christmann A."/>
            <person name="Boemecke M."/>
            <person name="Steckel S."/>
            <person name="Bhattacharyya A."/>
            <person name="Lykidis A."/>
            <person name="Overbeek R."/>
            <person name="Klenk H.-P."/>
            <person name="Gunsalus R.P."/>
            <person name="Fritz H.-J."/>
            <person name="Gottschalk G."/>
        </authorList>
    </citation>
    <scope>NUCLEOTIDE SEQUENCE [LARGE SCALE GENOMIC DNA]</scope>
    <source>
        <strain>ATCC BAA-159 / DSM 3647 / Goe1 / Go1 / JCM 11833 / OCM 88</strain>
    </source>
</reference>
<evidence type="ECO:0000255" key="1">
    <source>
        <dbReference type="HAMAP-Rule" id="MF_01518"/>
    </source>
</evidence>